<organism>
    <name type="scientific">Escherichia coli O157:H7</name>
    <dbReference type="NCBI Taxonomy" id="83334"/>
    <lineage>
        <taxon>Bacteria</taxon>
        <taxon>Pseudomonadati</taxon>
        <taxon>Pseudomonadota</taxon>
        <taxon>Gammaproteobacteria</taxon>
        <taxon>Enterobacterales</taxon>
        <taxon>Enterobacteriaceae</taxon>
        <taxon>Escherichia</taxon>
    </lineage>
</organism>
<sequence length="225" mass="24065">MSKRYFVTGTDTEVGKTVASCALLQAAKAAGYRTAGYKPVASGSEKTPEGLRNSDALALQRNSSLQLDYATVNPYTFAEPTSPHIISAQEGRSIESSVMSSGLRALEQQADWVLVEGAGGWFTPLSDTFTFADWVTQEQLPVILVVGVKLGCINHAMLTAQAIQHAGLTLAGWVANDVTPPGKRHAEYMTTLTRMIPAPLLGESPWLAENPENAATGKYINLALL</sequence>
<accession>Q8X821</accession>
<gene>
    <name evidence="2" type="primary">bioD1</name>
    <name type="ordered locus">Z0997</name>
    <name type="ordered locus">ECs0856</name>
</gene>
<name>BIOD1_ECO57</name>
<feature type="initiator methionine" description="Removed" evidence="1">
    <location>
        <position position="1"/>
    </location>
</feature>
<feature type="chain" id="PRO_0000187963" description="ATP-dependent dethiobiotin synthetase BioD 1">
    <location>
        <begin position="2"/>
        <end position="225"/>
    </location>
</feature>
<feature type="active site" evidence="2">
    <location>
        <position position="38"/>
    </location>
</feature>
<feature type="binding site" evidence="2">
    <location>
        <begin position="13"/>
        <end position="18"/>
    </location>
    <ligand>
        <name>ATP</name>
        <dbReference type="ChEBI" id="CHEBI:30616"/>
    </ligand>
</feature>
<feature type="binding site" evidence="2">
    <location>
        <position position="17"/>
    </location>
    <ligand>
        <name>Mg(2+)</name>
        <dbReference type="ChEBI" id="CHEBI:18420"/>
    </ligand>
</feature>
<feature type="binding site" evidence="2">
    <location>
        <position position="42"/>
    </location>
    <ligand>
        <name>substrate</name>
    </ligand>
</feature>
<feature type="binding site" evidence="2">
    <location>
        <position position="55"/>
    </location>
    <ligand>
        <name>ATP</name>
        <dbReference type="ChEBI" id="CHEBI:30616"/>
    </ligand>
</feature>
<feature type="binding site" evidence="2">
    <location>
        <position position="55"/>
    </location>
    <ligand>
        <name>Mg(2+)</name>
        <dbReference type="ChEBI" id="CHEBI:18420"/>
    </ligand>
</feature>
<feature type="binding site" evidence="2">
    <location>
        <begin position="116"/>
        <end position="119"/>
    </location>
    <ligand>
        <name>ATP</name>
        <dbReference type="ChEBI" id="CHEBI:30616"/>
    </ligand>
</feature>
<feature type="binding site" evidence="2">
    <location>
        <position position="116"/>
    </location>
    <ligand>
        <name>Mg(2+)</name>
        <dbReference type="ChEBI" id="CHEBI:18420"/>
    </ligand>
</feature>
<feature type="binding site" evidence="2">
    <location>
        <begin position="176"/>
        <end position="177"/>
    </location>
    <ligand>
        <name>ATP</name>
        <dbReference type="ChEBI" id="CHEBI:30616"/>
    </ligand>
</feature>
<feature type="binding site" evidence="2">
    <location>
        <begin position="205"/>
        <end position="207"/>
    </location>
    <ligand>
        <name>ATP</name>
        <dbReference type="ChEBI" id="CHEBI:30616"/>
    </ligand>
</feature>
<feature type="binding site" evidence="2">
    <location>
        <position position="212"/>
    </location>
    <ligand>
        <name>ATP</name>
        <dbReference type="ChEBI" id="CHEBI:30616"/>
    </ligand>
</feature>
<reference key="1">
    <citation type="journal article" date="2001" name="Nature">
        <title>Genome sequence of enterohaemorrhagic Escherichia coli O157:H7.</title>
        <authorList>
            <person name="Perna N.T."/>
            <person name="Plunkett G. III"/>
            <person name="Burland V."/>
            <person name="Mau B."/>
            <person name="Glasner J.D."/>
            <person name="Rose D.J."/>
            <person name="Mayhew G.F."/>
            <person name="Evans P.S."/>
            <person name="Gregor J."/>
            <person name="Kirkpatrick H.A."/>
            <person name="Posfai G."/>
            <person name="Hackett J."/>
            <person name="Klink S."/>
            <person name="Boutin A."/>
            <person name="Shao Y."/>
            <person name="Miller L."/>
            <person name="Grotbeck E.J."/>
            <person name="Davis N.W."/>
            <person name="Lim A."/>
            <person name="Dimalanta E.T."/>
            <person name="Potamousis K."/>
            <person name="Apodaca J."/>
            <person name="Anantharaman T.S."/>
            <person name="Lin J."/>
            <person name="Yen G."/>
            <person name="Schwartz D.C."/>
            <person name="Welch R.A."/>
            <person name="Blattner F.R."/>
        </authorList>
    </citation>
    <scope>NUCLEOTIDE SEQUENCE [LARGE SCALE GENOMIC DNA]</scope>
    <source>
        <strain>O157:H7 / EDL933 / ATCC 700927 / EHEC</strain>
    </source>
</reference>
<reference key="2">
    <citation type="journal article" date="2001" name="DNA Res.">
        <title>Complete genome sequence of enterohemorrhagic Escherichia coli O157:H7 and genomic comparison with a laboratory strain K-12.</title>
        <authorList>
            <person name="Hayashi T."/>
            <person name="Makino K."/>
            <person name="Ohnishi M."/>
            <person name="Kurokawa K."/>
            <person name="Ishii K."/>
            <person name="Yokoyama K."/>
            <person name="Han C.-G."/>
            <person name="Ohtsubo E."/>
            <person name="Nakayama K."/>
            <person name="Murata T."/>
            <person name="Tanaka M."/>
            <person name="Tobe T."/>
            <person name="Iida T."/>
            <person name="Takami H."/>
            <person name="Honda T."/>
            <person name="Sasakawa C."/>
            <person name="Ogasawara N."/>
            <person name="Yasunaga T."/>
            <person name="Kuhara S."/>
            <person name="Shiba T."/>
            <person name="Hattori M."/>
            <person name="Shinagawa H."/>
        </authorList>
    </citation>
    <scope>NUCLEOTIDE SEQUENCE [LARGE SCALE GENOMIC DNA]</scope>
    <source>
        <strain>O157:H7 / Sakai / RIMD 0509952 / EHEC</strain>
    </source>
</reference>
<protein>
    <recommendedName>
        <fullName evidence="2">ATP-dependent dethiobiotin synthetase BioD 1</fullName>
        <ecNumber evidence="2">6.3.3.3</ecNumber>
    </recommendedName>
    <alternativeName>
        <fullName evidence="2">DTB synthetase 1</fullName>
        <shortName evidence="2">DTBS 1</shortName>
    </alternativeName>
    <alternativeName>
        <fullName evidence="2">Dethiobiotin synthase 1</fullName>
    </alternativeName>
</protein>
<evidence type="ECO:0000250" key="1"/>
<evidence type="ECO:0000255" key="2">
    <source>
        <dbReference type="HAMAP-Rule" id="MF_00336"/>
    </source>
</evidence>
<proteinExistence type="inferred from homology"/>
<dbReference type="EC" id="6.3.3.3" evidence="2"/>
<dbReference type="EMBL" id="AE005174">
    <property type="protein sequence ID" value="AAG55149.1"/>
    <property type="molecule type" value="Genomic_DNA"/>
</dbReference>
<dbReference type="EMBL" id="BA000007">
    <property type="protein sequence ID" value="BAB34279.1"/>
    <property type="molecule type" value="Genomic_DNA"/>
</dbReference>
<dbReference type="PIR" id="A85586">
    <property type="entry name" value="A85586"/>
</dbReference>
<dbReference type="PIR" id="H90735">
    <property type="entry name" value="H90735"/>
</dbReference>
<dbReference type="SMR" id="Q8X821"/>
<dbReference type="STRING" id="155864.Z0997"/>
<dbReference type="KEGG" id="ece:Z0997"/>
<dbReference type="KEGG" id="ecs:ECs_0856"/>
<dbReference type="PATRIC" id="fig|386585.9.peg.970"/>
<dbReference type="eggNOG" id="COG0132">
    <property type="taxonomic scope" value="Bacteria"/>
</dbReference>
<dbReference type="HOGENOM" id="CLU_072551_0_0_6"/>
<dbReference type="UniPathway" id="UPA00078">
    <property type="reaction ID" value="UER00161"/>
</dbReference>
<dbReference type="Proteomes" id="UP000000558">
    <property type="component" value="Chromosome"/>
</dbReference>
<dbReference type="Proteomes" id="UP000002519">
    <property type="component" value="Chromosome"/>
</dbReference>
<dbReference type="GO" id="GO:0005829">
    <property type="term" value="C:cytosol"/>
    <property type="evidence" value="ECO:0007669"/>
    <property type="project" value="TreeGrafter"/>
</dbReference>
<dbReference type="GO" id="GO:0005524">
    <property type="term" value="F:ATP binding"/>
    <property type="evidence" value="ECO:0007669"/>
    <property type="project" value="UniProtKB-UniRule"/>
</dbReference>
<dbReference type="GO" id="GO:0004141">
    <property type="term" value="F:dethiobiotin synthase activity"/>
    <property type="evidence" value="ECO:0007669"/>
    <property type="project" value="UniProtKB-UniRule"/>
</dbReference>
<dbReference type="GO" id="GO:0000287">
    <property type="term" value="F:magnesium ion binding"/>
    <property type="evidence" value="ECO:0007669"/>
    <property type="project" value="UniProtKB-UniRule"/>
</dbReference>
<dbReference type="GO" id="GO:0009102">
    <property type="term" value="P:biotin biosynthetic process"/>
    <property type="evidence" value="ECO:0007669"/>
    <property type="project" value="UniProtKB-UniRule"/>
</dbReference>
<dbReference type="CDD" id="cd03109">
    <property type="entry name" value="DTBS"/>
    <property type="match status" value="1"/>
</dbReference>
<dbReference type="FunFam" id="3.40.50.300:FF:000292">
    <property type="entry name" value="ATP-dependent dethiobiotin synthetase BioD"/>
    <property type="match status" value="1"/>
</dbReference>
<dbReference type="Gene3D" id="3.40.50.300">
    <property type="entry name" value="P-loop containing nucleotide triphosphate hydrolases"/>
    <property type="match status" value="1"/>
</dbReference>
<dbReference type="HAMAP" id="MF_00336">
    <property type="entry name" value="BioD"/>
    <property type="match status" value="1"/>
</dbReference>
<dbReference type="InterPro" id="IPR004472">
    <property type="entry name" value="DTB_synth_BioD"/>
</dbReference>
<dbReference type="InterPro" id="IPR027417">
    <property type="entry name" value="P-loop_NTPase"/>
</dbReference>
<dbReference type="NCBIfam" id="TIGR00347">
    <property type="entry name" value="bioD"/>
    <property type="match status" value="1"/>
</dbReference>
<dbReference type="PANTHER" id="PTHR43210">
    <property type="entry name" value="DETHIOBIOTIN SYNTHETASE"/>
    <property type="match status" value="1"/>
</dbReference>
<dbReference type="PANTHER" id="PTHR43210:SF5">
    <property type="entry name" value="DETHIOBIOTIN SYNTHETASE"/>
    <property type="match status" value="1"/>
</dbReference>
<dbReference type="Pfam" id="PF13500">
    <property type="entry name" value="AAA_26"/>
    <property type="match status" value="1"/>
</dbReference>
<dbReference type="PIRSF" id="PIRSF006755">
    <property type="entry name" value="DTB_synth"/>
    <property type="match status" value="1"/>
</dbReference>
<dbReference type="SUPFAM" id="SSF52540">
    <property type="entry name" value="P-loop containing nucleoside triphosphate hydrolases"/>
    <property type="match status" value="1"/>
</dbReference>
<keyword id="KW-0067">ATP-binding</keyword>
<keyword id="KW-0093">Biotin biosynthesis</keyword>
<keyword id="KW-0963">Cytoplasm</keyword>
<keyword id="KW-0436">Ligase</keyword>
<keyword id="KW-0460">Magnesium</keyword>
<keyword id="KW-0479">Metal-binding</keyword>
<keyword id="KW-0547">Nucleotide-binding</keyword>
<keyword id="KW-1185">Reference proteome</keyword>
<comment type="function">
    <text evidence="2">Catalyzes a mechanistically unusual reaction, the ATP-dependent insertion of CO2 between the N7 and N8 nitrogen atoms of 7,8-diaminopelargonic acid (DAPA, also called 7,8-diammoniononanoate) to form a ureido ring.</text>
</comment>
<comment type="catalytic activity">
    <reaction evidence="2">
        <text>(7R,8S)-7,8-diammoniononanoate + CO2 + ATP = (4R,5S)-dethiobiotin + ADP + phosphate + 3 H(+)</text>
        <dbReference type="Rhea" id="RHEA:15805"/>
        <dbReference type="ChEBI" id="CHEBI:15378"/>
        <dbReference type="ChEBI" id="CHEBI:16526"/>
        <dbReference type="ChEBI" id="CHEBI:30616"/>
        <dbReference type="ChEBI" id="CHEBI:43474"/>
        <dbReference type="ChEBI" id="CHEBI:149469"/>
        <dbReference type="ChEBI" id="CHEBI:149473"/>
        <dbReference type="ChEBI" id="CHEBI:456216"/>
        <dbReference type="EC" id="6.3.3.3"/>
    </reaction>
</comment>
<comment type="cofactor">
    <cofactor evidence="2">
        <name>Mg(2+)</name>
        <dbReference type="ChEBI" id="CHEBI:18420"/>
    </cofactor>
</comment>
<comment type="pathway">
    <text evidence="2">Cofactor biosynthesis; biotin biosynthesis; biotin from 7,8-diaminononanoate: step 1/2.</text>
</comment>
<comment type="subunit">
    <text evidence="2">Homodimer.</text>
</comment>
<comment type="subcellular location">
    <subcellularLocation>
        <location evidence="2">Cytoplasm</location>
    </subcellularLocation>
</comment>
<comment type="similarity">
    <text evidence="2">Belongs to the dethiobiotin synthetase family.</text>
</comment>